<sequence length="181" mass="20139">MEPEIKIVNVVVSTQIGTDIDLEYAADILDNAEYEPEQFPGLVCRLSEPKVALLIFRSGKLNCTGAKCKEDAVIAIHKIIKELKEAGMDLIDNPEVNVQNMVATTELGMEPNLDDISTLECTEYEPEQFPGLVYRLSDPKVVVLIFGSGKVVITGLKVIEDAYKAYDKISKTLKELEEELY</sequence>
<gene>
    <name evidence="1" type="primary">tbp</name>
    <name type="ordered locus">MmarC6_0696</name>
</gene>
<feature type="chain" id="PRO_1000196664" description="TATA-box-binding protein">
    <location>
        <begin position="1"/>
        <end position="181"/>
    </location>
</feature>
<feature type="repeat" description="1">
    <location>
        <begin position="7"/>
        <end position="83"/>
    </location>
</feature>
<feature type="repeat" description="2">
    <location>
        <begin position="98"/>
        <end position="173"/>
    </location>
</feature>
<proteinExistence type="inferred from homology"/>
<evidence type="ECO:0000255" key="1">
    <source>
        <dbReference type="HAMAP-Rule" id="MF_00408"/>
    </source>
</evidence>
<keyword id="KW-0238">DNA-binding</keyword>
<keyword id="KW-0677">Repeat</keyword>
<keyword id="KW-0804">Transcription</keyword>
<keyword id="KW-0805">Transcription regulation</keyword>
<dbReference type="EMBL" id="CP000867">
    <property type="protein sequence ID" value="ABX01513.1"/>
    <property type="molecule type" value="Genomic_DNA"/>
</dbReference>
<dbReference type="SMR" id="A9A840"/>
<dbReference type="STRING" id="444158.MmarC6_0696"/>
<dbReference type="KEGG" id="mmx:MmarC6_0696"/>
<dbReference type="eggNOG" id="arCOG01764">
    <property type="taxonomic scope" value="Archaea"/>
</dbReference>
<dbReference type="HOGENOM" id="CLU_060161_4_3_2"/>
<dbReference type="OrthoDB" id="350539at2157"/>
<dbReference type="PhylomeDB" id="A9A840"/>
<dbReference type="GO" id="GO:0003677">
    <property type="term" value="F:DNA binding"/>
    <property type="evidence" value="ECO:0007669"/>
    <property type="project" value="UniProtKB-KW"/>
</dbReference>
<dbReference type="GO" id="GO:0003700">
    <property type="term" value="F:DNA-binding transcription factor activity"/>
    <property type="evidence" value="ECO:0007669"/>
    <property type="project" value="UniProtKB-UniRule"/>
</dbReference>
<dbReference type="GO" id="GO:0006352">
    <property type="term" value="P:DNA-templated transcription initiation"/>
    <property type="evidence" value="ECO:0007669"/>
    <property type="project" value="InterPro"/>
</dbReference>
<dbReference type="CDD" id="cd04518">
    <property type="entry name" value="TBP_archaea"/>
    <property type="match status" value="1"/>
</dbReference>
<dbReference type="FunFam" id="3.30.310.10:FF:000007">
    <property type="entry name" value="TATA-box-binding protein"/>
    <property type="match status" value="1"/>
</dbReference>
<dbReference type="FunFam" id="3.30.310.10:FF:000010">
    <property type="entry name" value="TATA-box-binding protein"/>
    <property type="match status" value="1"/>
</dbReference>
<dbReference type="Gene3D" id="3.30.310.10">
    <property type="entry name" value="TATA-Binding Protein"/>
    <property type="match status" value="2"/>
</dbReference>
<dbReference type="HAMAP" id="MF_00408">
    <property type="entry name" value="TATA_bind_prot_arch"/>
    <property type="match status" value="1"/>
</dbReference>
<dbReference type="InterPro" id="IPR000814">
    <property type="entry name" value="TBP"/>
</dbReference>
<dbReference type="InterPro" id="IPR033711">
    <property type="entry name" value="TBP_archaea"/>
</dbReference>
<dbReference type="InterPro" id="IPR030491">
    <property type="entry name" value="TBP_CS"/>
</dbReference>
<dbReference type="InterPro" id="IPR012295">
    <property type="entry name" value="TBP_dom_sf"/>
</dbReference>
<dbReference type="NCBIfam" id="NF001593">
    <property type="entry name" value="PRK00394.1-2"/>
    <property type="match status" value="1"/>
</dbReference>
<dbReference type="NCBIfam" id="NF001594">
    <property type="entry name" value="PRK00394.1-3"/>
    <property type="match status" value="1"/>
</dbReference>
<dbReference type="PANTHER" id="PTHR10126">
    <property type="entry name" value="TATA-BOX BINDING PROTEIN"/>
    <property type="match status" value="1"/>
</dbReference>
<dbReference type="Pfam" id="PF00352">
    <property type="entry name" value="TBP"/>
    <property type="match status" value="2"/>
</dbReference>
<dbReference type="PRINTS" id="PR00686">
    <property type="entry name" value="TIFACTORIID"/>
</dbReference>
<dbReference type="SUPFAM" id="SSF55945">
    <property type="entry name" value="TATA-box binding protein-like"/>
    <property type="match status" value="2"/>
</dbReference>
<dbReference type="PROSITE" id="PS00351">
    <property type="entry name" value="TFIID"/>
    <property type="match status" value="2"/>
</dbReference>
<reference key="1">
    <citation type="submission" date="2007-10" db="EMBL/GenBank/DDBJ databases">
        <title>Complete sequence of Methanococcus maripaludis C6.</title>
        <authorList>
            <consortium name="US DOE Joint Genome Institute"/>
            <person name="Copeland A."/>
            <person name="Lucas S."/>
            <person name="Lapidus A."/>
            <person name="Barry K."/>
            <person name="Glavina del Rio T."/>
            <person name="Dalin E."/>
            <person name="Tice H."/>
            <person name="Pitluck S."/>
            <person name="Clum A."/>
            <person name="Schmutz J."/>
            <person name="Larimer F."/>
            <person name="Land M."/>
            <person name="Hauser L."/>
            <person name="Kyrpides N."/>
            <person name="Mikhailova N."/>
            <person name="Sieprawska-Lupa M."/>
            <person name="Whitman W.B."/>
            <person name="Richardson P."/>
        </authorList>
    </citation>
    <scope>NUCLEOTIDE SEQUENCE [LARGE SCALE GENOMIC DNA]</scope>
    <source>
        <strain>C6 / ATCC BAA-1332</strain>
    </source>
</reference>
<organism>
    <name type="scientific">Methanococcus maripaludis (strain C6 / ATCC BAA-1332)</name>
    <dbReference type="NCBI Taxonomy" id="444158"/>
    <lineage>
        <taxon>Archaea</taxon>
        <taxon>Methanobacteriati</taxon>
        <taxon>Methanobacteriota</taxon>
        <taxon>Methanomada group</taxon>
        <taxon>Methanococci</taxon>
        <taxon>Methanococcales</taxon>
        <taxon>Methanococcaceae</taxon>
        <taxon>Methanococcus</taxon>
    </lineage>
</organism>
<comment type="function">
    <text evidence="1">General factor that plays a role in the activation of archaeal genes transcribed by RNA polymerase. Binds specifically to the TATA box promoter element which lies close to the position of transcription initiation.</text>
</comment>
<comment type="similarity">
    <text evidence="1">Belongs to the TBP family.</text>
</comment>
<accession>A9A840</accession>
<protein>
    <recommendedName>
        <fullName evidence="1">TATA-box-binding protein</fullName>
    </recommendedName>
    <alternativeName>
        <fullName evidence="1">Box A-binding protein</fullName>
        <shortName evidence="1">BAP</shortName>
    </alternativeName>
    <alternativeName>
        <fullName evidence="1">TATA sequence-binding protein</fullName>
        <shortName evidence="1">TBP</shortName>
    </alternativeName>
    <alternativeName>
        <fullName evidence="1">TATA-box factor</fullName>
    </alternativeName>
</protein>
<name>TBP_METM6</name>